<evidence type="ECO:0000255" key="1">
    <source>
        <dbReference type="HAMAP-Rule" id="MF_00564"/>
    </source>
</evidence>
<keyword id="KW-0548">Nucleotidyltransferase</keyword>
<keyword id="KW-0694">RNA-binding</keyword>
<keyword id="KW-0698">rRNA processing</keyword>
<keyword id="KW-0808">Transferase</keyword>
<keyword id="KW-0819">tRNA processing</keyword>
<keyword id="KW-0820">tRNA-binding</keyword>
<sequence length="250" mass="26459">MSTSAADTLSRPSVRPAGRAVDALRPFSLERGFTRYAEGSVLVRAGNTHVLCTASVLEKVPPFLKGRGEGWVTAEYGMLPRATHTRGDREAARGKQSGRTQEIQRLIGRSLRAVFDLRLLGERTLHLDCDVLQADGGTRCASITGAWVAAADAVALLMQRGDLAHNPIRDAVAAVSVGLVDGRAVLDLDYQEDSACAADVNVVMTGSGAFVEVQGTGEGATFTRGELDTMLGLAEGGIAQLVRAQREALQ</sequence>
<dbReference type="EC" id="2.7.7.56" evidence="1"/>
<dbReference type="EMBL" id="BX640432">
    <property type="protein sequence ID" value="CAE38285.1"/>
    <property type="molecule type" value="Genomic_DNA"/>
</dbReference>
<dbReference type="RefSeq" id="WP_010928838.1">
    <property type="nucleotide sequence ID" value="NC_002928.3"/>
</dbReference>
<dbReference type="SMR" id="Q7W6C1"/>
<dbReference type="GeneID" id="93204780"/>
<dbReference type="KEGG" id="bpa:BPP2995"/>
<dbReference type="HOGENOM" id="CLU_050858_0_0_4"/>
<dbReference type="Proteomes" id="UP000001421">
    <property type="component" value="Chromosome"/>
</dbReference>
<dbReference type="GO" id="GO:0000175">
    <property type="term" value="F:3'-5'-RNA exonuclease activity"/>
    <property type="evidence" value="ECO:0007669"/>
    <property type="project" value="UniProtKB-UniRule"/>
</dbReference>
<dbReference type="GO" id="GO:0000049">
    <property type="term" value="F:tRNA binding"/>
    <property type="evidence" value="ECO:0007669"/>
    <property type="project" value="UniProtKB-UniRule"/>
</dbReference>
<dbReference type="GO" id="GO:0009022">
    <property type="term" value="F:tRNA nucleotidyltransferase activity"/>
    <property type="evidence" value="ECO:0007669"/>
    <property type="project" value="UniProtKB-UniRule"/>
</dbReference>
<dbReference type="GO" id="GO:0016075">
    <property type="term" value="P:rRNA catabolic process"/>
    <property type="evidence" value="ECO:0007669"/>
    <property type="project" value="UniProtKB-UniRule"/>
</dbReference>
<dbReference type="GO" id="GO:0006364">
    <property type="term" value="P:rRNA processing"/>
    <property type="evidence" value="ECO:0007669"/>
    <property type="project" value="UniProtKB-KW"/>
</dbReference>
<dbReference type="GO" id="GO:0008033">
    <property type="term" value="P:tRNA processing"/>
    <property type="evidence" value="ECO:0007669"/>
    <property type="project" value="UniProtKB-UniRule"/>
</dbReference>
<dbReference type="CDD" id="cd11362">
    <property type="entry name" value="RNase_PH_bact"/>
    <property type="match status" value="1"/>
</dbReference>
<dbReference type="FunFam" id="3.30.230.70:FF:000003">
    <property type="entry name" value="Ribonuclease PH"/>
    <property type="match status" value="1"/>
</dbReference>
<dbReference type="Gene3D" id="3.30.230.70">
    <property type="entry name" value="GHMP Kinase, N-terminal domain"/>
    <property type="match status" value="1"/>
</dbReference>
<dbReference type="HAMAP" id="MF_00564">
    <property type="entry name" value="RNase_PH"/>
    <property type="match status" value="1"/>
</dbReference>
<dbReference type="InterPro" id="IPR001247">
    <property type="entry name" value="ExoRNase_PH_dom1"/>
</dbReference>
<dbReference type="InterPro" id="IPR015847">
    <property type="entry name" value="ExoRNase_PH_dom2"/>
</dbReference>
<dbReference type="InterPro" id="IPR036345">
    <property type="entry name" value="ExoRNase_PH_dom2_sf"/>
</dbReference>
<dbReference type="InterPro" id="IPR027408">
    <property type="entry name" value="PNPase/RNase_PH_dom_sf"/>
</dbReference>
<dbReference type="InterPro" id="IPR020568">
    <property type="entry name" value="Ribosomal_Su5_D2-typ_SF"/>
</dbReference>
<dbReference type="InterPro" id="IPR050080">
    <property type="entry name" value="RNase_PH"/>
</dbReference>
<dbReference type="InterPro" id="IPR002381">
    <property type="entry name" value="RNase_PH_bac-type"/>
</dbReference>
<dbReference type="InterPro" id="IPR018336">
    <property type="entry name" value="RNase_PH_CS"/>
</dbReference>
<dbReference type="NCBIfam" id="TIGR01966">
    <property type="entry name" value="RNasePH"/>
    <property type="match status" value="1"/>
</dbReference>
<dbReference type="PANTHER" id="PTHR11953">
    <property type="entry name" value="EXOSOME COMPLEX COMPONENT"/>
    <property type="match status" value="1"/>
</dbReference>
<dbReference type="PANTHER" id="PTHR11953:SF0">
    <property type="entry name" value="EXOSOME COMPLEX COMPONENT RRP41"/>
    <property type="match status" value="1"/>
</dbReference>
<dbReference type="Pfam" id="PF01138">
    <property type="entry name" value="RNase_PH"/>
    <property type="match status" value="1"/>
</dbReference>
<dbReference type="Pfam" id="PF03725">
    <property type="entry name" value="RNase_PH_C"/>
    <property type="match status" value="1"/>
</dbReference>
<dbReference type="SUPFAM" id="SSF55666">
    <property type="entry name" value="Ribonuclease PH domain 2-like"/>
    <property type="match status" value="1"/>
</dbReference>
<dbReference type="SUPFAM" id="SSF54211">
    <property type="entry name" value="Ribosomal protein S5 domain 2-like"/>
    <property type="match status" value="1"/>
</dbReference>
<dbReference type="PROSITE" id="PS01277">
    <property type="entry name" value="RIBONUCLEASE_PH"/>
    <property type="match status" value="1"/>
</dbReference>
<reference key="1">
    <citation type="journal article" date="2003" name="Nat. Genet.">
        <title>Comparative analysis of the genome sequences of Bordetella pertussis, Bordetella parapertussis and Bordetella bronchiseptica.</title>
        <authorList>
            <person name="Parkhill J."/>
            <person name="Sebaihia M."/>
            <person name="Preston A."/>
            <person name="Murphy L.D."/>
            <person name="Thomson N.R."/>
            <person name="Harris D.E."/>
            <person name="Holden M.T.G."/>
            <person name="Churcher C.M."/>
            <person name="Bentley S.D."/>
            <person name="Mungall K.L."/>
            <person name="Cerdeno-Tarraga A.-M."/>
            <person name="Temple L."/>
            <person name="James K.D."/>
            <person name="Harris B."/>
            <person name="Quail M.A."/>
            <person name="Achtman M."/>
            <person name="Atkin R."/>
            <person name="Baker S."/>
            <person name="Basham D."/>
            <person name="Bason N."/>
            <person name="Cherevach I."/>
            <person name="Chillingworth T."/>
            <person name="Collins M."/>
            <person name="Cronin A."/>
            <person name="Davis P."/>
            <person name="Doggett J."/>
            <person name="Feltwell T."/>
            <person name="Goble A."/>
            <person name="Hamlin N."/>
            <person name="Hauser H."/>
            <person name="Holroyd S."/>
            <person name="Jagels K."/>
            <person name="Leather S."/>
            <person name="Moule S."/>
            <person name="Norberczak H."/>
            <person name="O'Neil S."/>
            <person name="Ormond D."/>
            <person name="Price C."/>
            <person name="Rabbinowitsch E."/>
            <person name="Rutter S."/>
            <person name="Sanders M."/>
            <person name="Saunders D."/>
            <person name="Seeger K."/>
            <person name="Sharp S."/>
            <person name="Simmonds M."/>
            <person name="Skelton J."/>
            <person name="Squares R."/>
            <person name="Squares S."/>
            <person name="Stevens K."/>
            <person name="Unwin L."/>
            <person name="Whitehead S."/>
            <person name="Barrell B.G."/>
            <person name="Maskell D.J."/>
        </authorList>
    </citation>
    <scope>NUCLEOTIDE SEQUENCE [LARGE SCALE GENOMIC DNA]</scope>
    <source>
        <strain>12822 / ATCC BAA-587 / NCTC 13253</strain>
    </source>
</reference>
<feature type="chain" id="PRO_0000139873" description="Ribonuclease PH">
    <location>
        <begin position="1"/>
        <end position="250"/>
    </location>
</feature>
<feature type="binding site" evidence="1">
    <location>
        <position position="99"/>
    </location>
    <ligand>
        <name>phosphate</name>
        <dbReference type="ChEBI" id="CHEBI:43474"/>
        <note>substrate</note>
    </ligand>
</feature>
<feature type="binding site" evidence="1">
    <location>
        <begin position="137"/>
        <end position="139"/>
    </location>
    <ligand>
        <name>phosphate</name>
        <dbReference type="ChEBI" id="CHEBI:43474"/>
        <note>substrate</note>
    </ligand>
</feature>
<proteinExistence type="inferred from homology"/>
<gene>
    <name evidence="1" type="primary">rph</name>
    <name type="ordered locus">BPP2995</name>
</gene>
<name>RNPH_BORPA</name>
<organism>
    <name type="scientific">Bordetella parapertussis (strain 12822 / ATCC BAA-587 / NCTC 13253)</name>
    <dbReference type="NCBI Taxonomy" id="257311"/>
    <lineage>
        <taxon>Bacteria</taxon>
        <taxon>Pseudomonadati</taxon>
        <taxon>Pseudomonadota</taxon>
        <taxon>Betaproteobacteria</taxon>
        <taxon>Burkholderiales</taxon>
        <taxon>Alcaligenaceae</taxon>
        <taxon>Bordetella</taxon>
    </lineage>
</organism>
<comment type="function">
    <text evidence="1">Phosphorolytic 3'-5' exoribonuclease that plays an important role in tRNA 3'-end maturation. Removes nucleotide residues following the 3'-CCA terminus of tRNAs; can also add nucleotides to the ends of RNA molecules by using nucleoside diphosphates as substrates, but this may not be physiologically important. Probably plays a role in initiation of 16S rRNA degradation (leading to ribosome degradation) during starvation.</text>
</comment>
<comment type="catalytic activity">
    <reaction evidence="1">
        <text>tRNA(n+1) + phosphate = tRNA(n) + a ribonucleoside 5'-diphosphate</text>
        <dbReference type="Rhea" id="RHEA:10628"/>
        <dbReference type="Rhea" id="RHEA-COMP:17343"/>
        <dbReference type="Rhea" id="RHEA-COMP:17344"/>
        <dbReference type="ChEBI" id="CHEBI:43474"/>
        <dbReference type="ChEBI" id="CHEBI:57930"/>
        <dbReference type="ChEBI" id="CHEBI:173114"/>
        <dbReference type="EC" id="2.7.7.56"/>
    </reaction>
</comment>
<comment type="subunit">
    <text evidence="1">Homohexameric ring arranged as a trimer of dimers.</text>
</comment>
<comment type="similarity">
    <text evidence="1">Belongs to the RNase PH family.</text>
</comment>
<accession>Q7W6C1</accession>
<protein>
    <recommendedName>
        <fullName evidence="1">Ribonuclease PH</fullName>
        <shortName evidence="1">RNase PH</shortName>
        <ecNumber evidence="1">2.7.7.56</ecNumber>
    </recommendedName>
    <alternativeName>
        <fullName evidence="1">tRNA nucleotidyltransferase</fullName>
    </alternativeName>
</protein>